<gene>
    <name evidence="1" type="primary">lptD</name>
    <name type="synonym">imp</name>
    <name type="synonym">ostA</name>
    <name type="ordered locus">VC_0446</name>
</gene>
<proteinExistence type="inferred from homology"/>
<feature type="signal peptide" evidence="1">
    <location>
        <begin position="1"/>
        <end position="24"/>
    </location>
</feature>
<feature type="chain" id="PRO_0000020291" description="LPS-assembly protein LptD">
    <location>
        <begin position="25"/>
        <end position="783"/>
    </location>
</feature>
<organism>
    <name type="scientific">Vibrio cholerae serotype O1 (strain ATCC 39315 / El Tor Inaba N16961)</name>
    <dbReference type="NCBI Taxonomy" id="243277"/>
    <lineage>
        <taxon>Bacteria</taxon>
        <taxon>Pseudomonadati</taxon>
        <taxon>Pseudomonadota</taxon>
        <taxon>Gammaproteobacteria</taxon>
        <taxon>Vibrionales</taxon>
        <taxon>Vibrionaceae</taxon>
        <taxon>Vibrio</taxon>
    </lineage>
</organism>
<keyword id="KW-0998">Cell outer membrane</keyword>
<keyword id="KW-0472">Membrane</keyword>
<keyword id="KW-1185">Reference proteome</keyword>
<keyword id="KW-0732">Signal</keyword>
<protein>
    <recommendedName>
        <fullName evidence="1">LPS-assembly protein LptD</fullName>
    </recommendedName>
</protein>
<reference key="1">
    <citation type="journal article" date="2000" name="Nature">
        <title>DNA sequence of both chromosomes of the cholera pathogen Vibrio cholerae.</title>
        <authorList>
            <person name="Heidelberg J.F."/>
            <person name="Eisen J.A."/>
            <person name="Nelson W.C."/>
            <person name="Clayton R.A."/>
            <person name="Gwinn M.L."/>
            <person name="Dodson R.J."/>
            <person name="Haft D.H."/>
            <person name="Hickey E.K."/>
            <person name="Peterson J.D."/>
            <person name="Umayam L.A."/>
            <person name="Gill S.R."/>
            <person name="Nelson K.E."/>
            <person name="Read T.D."/>
            <person name="Tettelin H."/>
            <person name="Richardson D.L."/>
            <person name="Ermolaeva M.D."/>
            <person name="Vamathevan J.J."/>
            <person name="Bass S."/>
            <person name="Qin H."/>
            <person name="Dragoi I."/>
            <person name="Sellers P."/>
            <person name="McDonald L.A."/>
            <person name="Utterback T.R."/>
            <person name="Fleischmann R.D."/>
            <person name="Nierman W.C."/>
            <person name="White O."/>
            <person name="Salzberg S.L."/>
            <person name="Smith H.O."/>
            <person name="Colwell R.R."/>
            <person name="Mekalanos J.J."/>
            <person name="Venter J.C."/>
            <person name="Fraser C.M."/>
        </authorList>
    </citation>
    <scope>NUCLEOTIDE SEQUENCE [LARGE SCALE GENOMIC DNA]</scope>
    <source>
        <strain>ATCC 39315 / El Tor Inaba N16961</strain>
    </source>
</reference>
<evidence type="ECO:0000255" key="1">
    <source>
        <dbReference type="HAMAP-Rule" id="MF_01411"/>
    </source>
</evidence>
<evidence type="ECO:0000305" key="2"/>
<sequence>MSCFSRTFLAASISAALFAPQIQAEASVDDNRAQLPNGEQCLVNQPEPTNPGQQPINVEADKLEAINGQKATYSGNVVVVQGKKRIAADNVTLHQQENVVVAEGNVQFSDGEIKTHSTKATNHLNTDEMTLENTRYQFLCEPGRGEAVYVSKTGKAVYEIEDGSITSCPDGDNAWRMRASSIDVDQNEEIATFYNPRLEVQNVPVFYLPYLTVPIGDTRKTGFLYPTASYGSRNGYSFEVPIYWNLAPQYDLETTFNYMQKRGTQLNSVFRYLTDFGAGQIKSEYLADDQLHTELGDRWAFQYEHNGIFQQAWKFEIDYSKVSDINYFSDLDSGVGNREDGQLIQEGRATYRSDNWDSALLVRDFQLLTKDTTSTNLPYRLMPQLSYNYYAPETMKYLDLDLVSHVSRFETDARGKPSATRVHIEPGLKIPFSNTWGNWTTEARVLGTYYQQDLDKTTDAKLEESVTRVIPEIRSVAGIVLERDTVLLDDYTQTLEPKIQYLYVPEKYQDNIGLYDSTLLQTDYYGLFRSRKYSGVDRIESANQVSYGASTRFFDSNYKERLNIAFGQIFYLDSKLNPSNKNPDSTSDKTSYSAWAVEMDFNFADYLFYHGGIQYDIDSQAVQLGNSTLEYRVASGYIQANYRYVAKDYIRNTVGDSITNIDDITRDGISQAGILAGYQLSRKWSASGQYYYDLTTDEALEWLANLTYTSDCWYVGFTYSNQLKSWNGNFVTDPYATPIYENNFSFNIGIIGFGTSIGAGSSMTGVDSAGNSLGYGRPFFLNN</sequence>
<dbReference type="EMBL" id="AE003852">
    <property type="protein sequence ID" value="AAF93619.1"/>
    <property type="status" value="ALT_INIT"/>
    <property type="molecule type" value="Genomic_DNA"/>
</dbReference>
<dbReference type="PIR" id="E82323">
    <property type="entry name" value="E82323"/>
</dbReference>
<dbReference type="RefSeq" id="NP_230100.1">
    <property type="nucleotide sequence ID" value="NC_002505.1"/>
</dbReference>
<dbReference type="RefSeq" id="WP_001277601.1">
    <property type="nucleotide sequence ID" value="NZ_LT906614.1"/>
</dbReference>
<dbReference type="SMR" id="Q9KUR9"/>
<dbReference type="STRING" id="243277.VC_0446"/>
<dbReference type="DNASU" id="2615778"/>
<dbReference type="EnsemblBacteria" id="AAF93619">
    <property type="protein sequence ID" value="AAF93619"/>
    <property type="gene ID" value="VC_0446"/>
</dbReference>
<dbReference type="KEGG" id="vch:VC_0446"/>
<dbReference type="PATRIC" id="fig|243277.26.peg.420"/>
<dbReference type="eggNOG" id="COG1452">
    <property type="taxonomic scope" value="Bacteria"/>
</dbReference>
<dbReference type="HOGENOM" id="CLU_009039_2_0_6"/>
<dbReference type="Proteomes" id="UP000000584">
    <property type="component" value="Chromosome 1"/>
</dbReference>
<dbReference type="GO" id="GO:0009279">
    <property type="term" value="C:cell outer membrane"/>
    <property type="evidence" value="ECO:0000318"/>
    <property type="project" value="GO_Central"/>
</dbReference>
<dbReference type="GO" id="GO:1990351">
    <property type="term" value="C:transporter complex"/>
    <property type="evidence" value="ECO:0000318"/>
    <property type="project" value="GO_Central"/>
</dbReference>
<dbReference type="GO" id="GO:0043165">
    <property type="term" value="P:Gram-negative-bacterium-type cell outer membrane assembly"/>
    <property type="evidence" value="ECO:0007669"/>
    <property type="project" value="UniProtKB-UniRule"/>
</dbReference>
<dbReference type="GO" id="GO:0015920">
    <property type="term" value="P:lipopolysaccharide transport"/>
    <property type="evidence" value="ECO:0007669"/>
    <property type="project" value="InterPro"/>
</dbReference>
<dbReference type="Gene3D" id="2.60.450.10">
    <property type="entry name" value="Lipopolysaccharide (LPS) transport protein A like domain"/>
    <property type="match status" value="1"/>
</dbReference>
<dbReference type="HAMAP" id="MF_01411">
    <property type="entry name" value="LPS_assembly_LptD"/>
    <property type="match status" value="1"/>
</dbReference>
<dbReference type="InterPro" id="IPR020889">
    <property type="entry name" value="LipoPS_assembly_LptD"/>
</dbReference>
<dbReference type="InterPro" id="IPR050218">
    <property type="entry name" value="LptD"/>
</dbReference>
<dbReference type="InterPro" id="IPR007543">
    <property type="entry name" value="LptD_C"/>
</dbReference>
<dbReference type="InterPro" id="IPR005653">
    <property type="entry name" value="OstA-like_N"/>
</dbReference>
<dbReference type="NCBIfam" id="NF002997">
    <property type="entry name" value="PRK03761.1"/>
    <property type="match status" value="1"/>
</dbReference>
<dbReference type="PANTHER" id="PTHR30189">
    <property type="entry name" value="LPS-ASSEMBLY PROTEIN"/>
    <property type="match status" value="1"/>
</dbReference>
<dbReference type="PANTHER" id="PTHR30189:SF1">
    <property type="entry name" value="LPS-ASSEMBLY PROTEIN LPTD"/>
    <property type="match status" value="1"/>
</dbReference>
<dbReference type="Pfam" id="PF04453">
    <property type="entry name" value="LptD"/>
    <property type="match status" value="1"/>
</dbReference>
<dbReference type="Pfam" id="PF03968">
    <property type="entry name" value="LptD_N"/>
    <property type="match status" value="1"/>
</dbReference>
<accession>Q9KUR9</accession>
<name>LPTD_VIBCH</name>
<comment type="function">
    <text evidence="1">Together with LptE, is involved in the assembly of lipopolysaccharide (LPS) at the surface of the outer membrane.</text>
</comment>
<comment type="subunit">
    <text evidence="1">Component of the lipopolysaccharide transport and assembly complex. Interacts with LptE and LptA.</text>
</comment>
<comment type="subcellular location">
    <subcellularLocation>
        <location evidence="1">Cell outer membrane</location>
    </subcellularLocation>
</comment>
<comment type="similarity">
    <text evidence="1">Belongs to the LptD family.</text>
</comment>
<comment type="sequence caution" evidence="2">
    <conflict type="erroneous initiation">
        <sequence resource="EMBL-CDS" id="AAF93619"/>
    </conflict>
</comment>